<comment type="function">
    <text evidence="1">Promotes RNA polymerase assembly. Latches the N- and C-terminal regions of the beta' subunit thereby facilitating its interaction with the beta and alpha subunits.</text>
</comment>
<comment type="catalytic activity">
    <reaction evidence="1">
        <text>RNA(n) + a ribonucleoside 5'-triphosphate = RNA(n+1) + diphosphate</text>
        <dbReference type="Rhea" id="RHEA:21248"/>
        <dbReference type="Rhea" id="RHEA-COMP:14527"/>
        <dbReference type="Rhea" id="RHEA-COMP:17342"/>
        <dbReference type="ChEBI" id="CHEBI:33019"/>
        <dbReference type="ChEBI" id="CHEBI:61557"/>
        <dbReference type="ChEBI" id="CHEBI:140395"/>
        <dbReference type="EC" id="2.7.7.6"/>
    </reaction>
</comment>
<comment type="subunit">
    <text evidence="1">The RNAP catalytic core consists of 2 alpha, 1 beta, 1 beta' and 1 omega subunit. When a sigma factor is associated with the core the holoenzyme is formed, which can initiate transcription.</text>
</comment>
<comment type="similarity">
    <text evidence="1">Belongs to the RNA polymerase subunit omega family.</text>
</comment>
<evidence type="ECO:0000255" key="1">
    <source>
        <dbReference type="HAMAP-Rule" id="MF_00366"/>
    </source>
</evidence>
<protein>
    <recommendedName>
        <fullName evidence="1">DNA-directed RNA polymerase subunit omega</fullName>
        <shortName evidence="1">RNAP omega subunit</shortName>
        <ecNumber evidence="1">2.7.7.6</ecNumber>
    </recommendedName>
    <alternativeName>
        <fullName evidence="1">RNA polymerase omega subunit</fullName>
    </alternativeName>
    <alternativeName>
        <fullName evidence="1">Transcriptase subunit omega</fullName>
    </alternativeName>
</protein>
<gene>
    <name evidence="1" type="primary">rpoZ</name>
    <name type="ordered locus">SG3690</name>
</gene>
<name>RPOZ_SALG2</name>
<feature type="chain" id="PRO_1000121267" description="DNA-directed RNA polymerase subunit omega">
    <location>
        <begin position="1"/>
        <end position="91"/>
    </location>
</feature>
<proteinExistence type="inferred from homology"/>
<keyword id="KW-0240">DNA-directed RNA polymerase</keyword>
<keyword id="KW-0548">Nucleotidyltransferase</keyword>
<keyword id="KW-0804">Transcription</keyword>
<keyword id="KW-0808">Transferase</keyword>
<accession>B5RG73</accession>
<reference key="1">
    <citation type="journal article" date="2008" name="Genome Res.">
        <title>Comparative genome analysis of Salmonella enteritidis PT4 and Salmonella gallinarum 287/91 provides insights into evolutionary and host adaptation pathways.</title>
        <authorList>
            <person name="Thomson N.R."/>
            <person name="Clayton D.J."/>
            <person name="Windhorst D."/>
            <person name="Vernikos G."/>
            <person name="Davidson S."/>
            <person name="Churcher C."/>
            <person name="Quail M.A."/>
            <person name="Stevens M."/>
            <person name="Jones M.A."/>
            <person name="Watson M."/>
            <person name="Barron A."/>
            <person name="Layton A."/>
            <person name="Pickard D."/>
            <person name="Kingsley R.A."/>
            <person name="Bignell A."/>
            <person name="Clark L."/>
            <person name="Harris B."/>
            <person name="Ormond D."/>
            <person name="Abdellah Z."/>
            <person name="Brooks K."/>
            <person name="Cherevach I."/>
            <person name="Chillingworth T."/>
            <person name="Woodward J."/>
            <person name="Norberczak H."/>
            <person name="Lord A."/>
            <person name="Arrowsmith C."/>
            <person name="Jagels K."/>
            <person name="Moule S."/>
            <person name="Mungall K."/>
            <person name="Saunders M."/>
            <person name="Whitehead S."/>
            <person name="Chabalgoity J.A."/>
            <person name="Maskell D."/>
            <person name="Humphreys T."/>
            <person name="Roberts M."/>
            <person name="Barrow P.A."/>
            <person name="Dougan G."/>
            <person name="Parkhill J."/>
        </authorList>
    </citation>
    <scope>NUCLEOTIDE SEQUENCE [LARGE SCALE GENOMIC DNA]</scope>
    <source>
        <strain>287/91 / NCTC 13346</strain>
    </source>
</reference>
<organism>
    <name type="scientific">Salmonella gallinarum (strain 287/91 / NCTC 13346)</name>
    <dbReference type="NCBI Taxonomy" id="550538"/>
    <lineage>
        <taxon>Bacteria</taxon>
        <taxon>Pseudomonadati</taxon>
        <taxon>Pseudomonadota</taxon>
        <taxon>Gammaproteobacteria</taxon>
        <taxon>Enterobacterales</taxon>
        <taxon>Enterobacteriaceae</taxon>
        <taxon>Salmonella</taxon>
    </lineage>
</organism>
<sequence>MARVTVQDAVEKIGNRFDLVLVAARRARQMQVGGKDPLVPEENDKTTVIALREIEEGLINNQILDVRERQEQQEQEAAELQAVTAIAEGRR</sequence>
<dbReference type="EC" id="2.7.7.6" evidence="1"/>
<dbReference type="EMBL" id="AM933173">
    <property type="protein sequence ID" value="CAR39470.1"/>
    <property type="molecule type" value="Genomic_DNA"/>
</dbReference>
<dbReference type="RefSeq" id="WP_000135058.1">
    <property type="nucleotide sequence ID" value="NC_011274.1"/>
</dbReference>
<dbReference type="SMR" id="B5RG73"/>
<dbReference type="GeneID" id="98390719"/>
<dbReference type="KEGG" id="seg:SG3690"/>
<dbReference type="HOGENOM" id="CLU_125406_5_3_6"/>
<dbReference type="Proteomes" id="UP000008321">
    <property type="component" value="Chromosome"/>
</dbReference>
<dbReference type="GO" id="GO:0000428">
    <property type="term" value="C:DNA-directed RNA polymerase complex"/>
    <property type="evidence" value="ECO:0007669"/>
    <property type="project" value="UniProtKB-KW"/>
</dbReference>
<dbReference type="GO" id="GO:0003677">
    <property type="term" value="F:DNA binding"/>
    <property type="evidence" value="ECO:0007669"/>
    <property type="project" value="UniProtKB-UniRule"/>
</dbReference>
<dbReference type="GO" id="GO:0003899">
    <property type="term" value="F:DNA-directed RNA polymerase activity"/>
    <property type="evidence" value="ECO:0007669"/>
    <property type="project" value="UniProtKB-UniRule"/>
</dbReference>
<dbReference type="GO" id="GO:0006351">
    <property type="term" value="P:DNA-templated transcription"/>
    <property type="evidence" value="ECO:0007669"/>
    <property type="project" value="UniProtKB-UniRule"/>
</dbReference>
<dbReference type="FunFam" id="3.90.940.10:FF:000001">
    <property type="entry name" value="DNA-directed RNA polymerase subunit omega"/>
    <property type="match status" value="1"/>
</dbReference>
<dbReference type="Gene3D" id="3.90.940.10">
    <property type="match status" value="1"/>
</dbReference>
<dbReference type="HAMAP" id="MF_00366">
    <property type="entry name" value="RNApol_bact_RpoZ"/>
    <property type="match status" value="1"/>
</dbReference>
<dbReference type="InterPro" id="IPR003716">
    <property type="entry name" value="DNA-dir_RNA_pol_omega"/>
</dbReference>
<dbReference type="InterPro" id="IPR006110">
    <property type="entry name" value="Pol_omega/Rpo6/RPB6"/>
</dbReference>
<dbReference type="InterPro" id="IPR036161">
    <property type="entry name" value="RPB6/omega-like_sf"/>
</dbReference>
<dbReference type="NCBIfam" id="TIGR00690">
    <property type="entry name" value="rpoZ"/>
    <property type="match status" value="1"/>
</dbReference>
<dbReference type="PANTHER" id="PTHR34476">
    <property type="entry name" value="DNA-DIRECTED RNA POLYMERASE SUBUNIT OMEGA"/>
    <property type="match status" value="1"/>
</dbReference>
<dbReference type="PANTHER" id="PTHR34476:SF1">
    <property type="entry name" value="DNA-DIRECTED RNA POLYMERASE SUBUNIT OMEGA"/>
    <property type="match status" value="1"/>
</dbReference>
<dbReference type="Pfam" id="PF01192">
    <property type="entry name" value="RNA_pol_Rpb6"/>
    <property type="match status" value="1"/>
</dbReference>
<dbReference type="SMART" id="SM01409">
    <property type="entry name" value="RNA_pol_Rpb6"/>
    <property type="match status" value="1"/>
</dbReference>
<dbReference type="SUPFAM" id="SSF63562">
    <property type="entry name" value="RPB6/omega subunit-like"/>
    <property type="match status" value="1"/>
</dbReference>